<keyword id="KW-0002">3D-structure</keyword>
<keyword id="KW-0238">DNA-binding</keyword>
<keyword id="KW-1185">Reference proteome</keyword>
<keyword id="KW-0678">Repressor</keyword>
<keyword id="KW-0346">Stress response</keyword>
<keyword id="KW-0804">Transcription</keyword>
<keyword id="KW-0805">Transcription regulation</keyword>
<dbReference type="EMBL" id="AF008220">
    <property type="protein sequence ID" value="AAC00305.1"/>
    <property type="molecule type" value="Genomic_DNA"/>
</dbReference>
<dbReference type="EMBL" id="AL009126">
    <property type="protein sequence ID" value="CAB14941.1"/>
    <property type="molecule type" value="Genomic_DNA"/>
</dbReference>
<dbReference type="PIR" id="H70001">
    <property type="entry name" value="H70001"/>
</dbReference>
<dbReference type="PDB" id="6MJ1">
    <property type="method" value="X-ray"/>
    <property type="resolution" value="2.60 A"/>
    <property type="chains" value="A=1-207"/>
</dbReference>
<dbReference type="PDBsum" id="6MJ1"/>
<dbReference type="SMR" id="O34970"/>
<dbReference type="FunCoup" id="O34970">
    <property type="interactions" value="90"/>
</dbReference>
<dbReference type="STRING" id="224308.BSU29630"/>
<dbReference type="PaxDb" id="224308-BSU29630"/>
<dbReference type="EnsemblBacteria" id="CAB14941">
    <property type="protein sequence ID" value="CAB14941"/>
    <property type="gene ID" value="BSU_29630"/>
</dbReference>
<dbReference type="GeneID" id="937327"/>
<dbReference type="KEGG" id="bsu:BSU29630"/>
<dbReference type="PATRIC" id="fig|224308.179.peg.3219"/>
<dbReference type="eggNOG" id="COG1309">
    <property type="taxonomic scope" value="Bacteria"/>
</dbReference>
<dbReference type="InParanoid" id="O34970"/>
<dbReference type="OrthoDB" id="9789566at2"/>
<dbReference type="BioCyc" id="BSUB:BSU29630-MONOMER"/>
<dbReference type="Proteomes" id="UP000001570">
    <property type="component" value="Chromosome"/>
</dbReference>
<dbReference type="GO" id="GO:0003700">
    <property type="term" value="F:DNA-binding transcription factor activity"/>
    <property type="evidence" value="ECO:0000318"/>
    <property type="project" value="GO_Central"/>
</dbReference>
<dbReference type="GO" id="GO:0000976">
    <property type="term" value="F:transcription cis-regulatory region binding"/>
    <property type="evidence" value="ECO:0000318"/>
    <property type="project" value="GO_Central"/>
</dbReference>
<dbReference type="GO" id="GO:0006355">
    <property type="term" value="P:regulation of DNA-templated transcription"/>
    <property type="evidence" value="ECO:0000318"/>
    <property type="project" value="GO_Central"/>
</dbReference>
<dbReference type="Gene3D" id="1.10.10.60">
    <property type="entry name" value="Homeodomain-like"/>
    <property type="match status" value="1"/>
</dbReference>
<dbReference type="Gene3D" id="1.10.357.10">
    <property type="entry name" value="Tetracycline Repressor, domain 2"/>
    <property type="match status" value="1"/>
</dbReference>
<dbReference type="InterPro" id="IPR023772">
    <property type="entry name" value="DNA-bd_HTH_TetR-type_CS"/>
</dbReference>
<dbReference type="InterPro" id="IPR009057">
    <property type="entry name" value="Homeodomain-like_sf"/>
</dbReference>
<dbReference type="InterPro" id="IPR050624">
    <property type="entry name" value="HTH-type_Tx_Regulator"/>
</dbReference>
<dbReference type="InterPro" id="IPR001647">
    <property type="entry name" value="HTH_TetR"/>
</dbReference>
<dbReference type="NCBIfam" id="NF037937">
    <property type="entry name" value="septum_RefZ"/>
    <property type="match status" value="1"/>
</dbReference>
<dbReference type="PANTHER" id="PTHR43479">
    <property type="entry name" value="ACREF/ENVCD OPERON REPRESSOR-RELATED"/>
    <property type="match status" value="1"/>
</dbReference>
<dbReference type="PANTHER" id="PTHR43479:SF11">
    <property type="entry name" value="ACREF_ENVCD OPERON REPRESSOR-RELATED"/>
    <property type="match status" value="1"/>
</dbReference>
<dbReference type="Pfam" id="PF00440">
    <property type="entry name" value="TetR_N"/>
    <property type="match status" value="1"/>
</dbReference>
<dbReference type="PRINTS" id="PR00455">
    <property type="entry name" value="HTHTETR"/>
</dbReference>
<dbReference type="SUPFAM" id="SSF46689">
    <property type="entry name" value="Homeodomain-like"/>
    <property type="match status" value="1"/>
</dbReference>
<dbReference type="PROSITE" id="PS01081">
    <property type="entry name" value="HTH_TETR_1"/>
    <property type="match status" value="1"/>
</dbReference>
<dbReference type="PROSITE" id="PS50977">
    <property type="entry name" value="HTH_TETR_2"/>
    <property type="match status" value="1"/>
</dbReference>
<gene>
    <name type="primary">yttP</name>
    <name type="ordered locus">BSU29630</name>
</gene>
<evidence type="ECO:0000255" key="1">
    <source>
        <dbReference type="PROSITE-ProRule" id="PRU00335"/>
    </source>
</evidence>
<evidence type="ECO:0000269" key="2">
    <source>
    </source>
</evidence>
<evidence type="ECO:0007829" key="3">
    <source>
        <dbReference type="PDB" id="6MJ1"/>
    </source>
</evidence>
<protein>
    <recommendedName>
        <fullName>Probable HTH-type transcriptional regulator YttP</fullName>
    </recommendedName>
    <alternativeName>
        <fullName>Stress response protein YttP</fullName>
    </alternativeName>
</protein>
<reference key="1">
    <citation type="journal article" date="1997" name="Microbiology">
        <title>Sequencing and functional annotation of the Bacillus subtilis genes in the 200 kb rrnB-dnaB region.</title>
        <authorList>
            <person name="Lapidus A."/>
            <person name="Galleron N."/>
            <person name="Sorokin A."/>
            <person name="Ehrlich S.D."/>
        </authorList>
    </citation>
    <scope>NUCLEOTIDE SEQUENCE [GENOMIC DNA]</scope>
    <source>
        <strain>168</strain>
    </source>
</reference>
<reference key="2">
    <citation type="journal article" date="1997" name="Nature">
        <title>The complete genome sequence of the Gram-positive bacterium Bacillus subtilis.</title>
        <authorList>
            <person name="Kunst F."/>
            <person name="Ogasawara N."/>
            <person name="Moszer I."/>
            <person name="Albertini A.M."/>
            <person name="Alloni G."/>
            <person name="Azevedo V."/>
            <person name="Bertero M.G."/>
            <person name="Bessieres P."/>
            <person name="Bolotin A."/>
            <person name="Borchert S."/>
            <person name="Borriss R."/>
            <person name="Boursier L."/>
            <person name="Brans A."/>
            <person name="Braun M."/>
            <person name="Brignell S.C."/>
            <person name="Bron S."/>
            <person name="Brouillet S."/>
            <person name="Bruschi C.V."/>
            <person name="Caldwell B."/>
            <person name="Capuano V."/>
            <person name="Carter N.M."/>
            <person name="Choi S.-K."/>
            <person name="Codani J.-J."/>
            <person name="Connerton I.F."/>
            <person name="Cummings N.J."/>
            <person name="Daniel R.A."/>
            <person name="Denizot F."/>
            <person name="Devine K.M."/>
            <person name="Duesterhoeft A."/>
            <person name="Ehrlich S.D."/>
            <person name="Emmerson P.T."/>
            <person name="Entian K.-D."/>
            <person name="Errington J."/>
            <person name="Fabret C."/>
            <person name="Ferrari E."/>
            <person name="Foulger D."/>
            <person name="Fritz C."/>
            <person name="Fujita M."/>
            <person name="Fujita Y."/>
            <person name="Fuma S."/>
            <person name="Galizzi A."/>
            <person name="Galleron N."/>
            <person name="Ghim S.-Y."/>
            <person name="Glaser P."/>
            <person name="Goffeau A."/>
            <person name="Golightly E.J."/>
            <person name="Grandi G."/>
            <person name="Guiseppi G."/>
            <person name="Guy B.J."/>
            <person name="Haga K."/>
            <person name="Haiech J."/>
            <person name="Harwood C.R."/>
            <person name="Henaut A."/>
            <person name="Hilbert H."/>
            <person name="Holsappel S."/>
            <person name="Hosono S."/>
            <person name="Hullo M.-F."/>
            <person name="Itaya M."/>
            <person name="Jones L.-M."/>
            <person name="Joris B."/>
            <person name="Karamata D."/>
            <person name="Kasahara Y."/>
            <person name="Klaerr-Blanchard M."/>
            <person name="Klein C."/>
            <person name="Kobayashi Y."/>
            <person name="Koetter P."/>
            <person name="Koningstein G."/>
            <person name="Krogh S."/>
            <person name="Kumano M."/>
            <person name="Kurita K."/>
            <person name="Lapidus A."/>
            <person name="Lardinois S."/>
            <person name="Lauber J."/>
            <person name="Lazarevic V."/>
            <person name="Lee S.-M."/>
            <person name="Levine A."/>
            <person name="Liu H."/>
            <person name="Masuda S."/>
            <person name="Mauel C."/>
            <person name="Medigue C."/>
            <person name="Medina N."/>
            <person name="Mellado R.P."/>
            <person name="Mizuno M."/>
            <person name="Moestl D."/>
            <person name="Nakai S."/>
            <person name="Noback M."/>
            <person name="Noone D."/>
            <person name="O'Reilly M."/>
            <person name="Ogawa K."/>
            <person name="Ogiwara A."/>
            <person name="Oudega B."/>
            <person name="Park S.-H."/>
            <person name="Parro V."/>
            <person name="Pohl T.M."/>
            <person name="Portetelle D."/>
            <person name="Porwollik S."/>
            <person name="Prescott A.M."/>
            <person name="Presecan E."/>
            <person name="Pujic P."/>
            <person name="Purnelle B."/>
            <person name="Rapoport G."/>
            <person name="Rey M."/>
            <person name="Reynolds S."/>
            <person name="Rieger M."/>
            <person name="Rivolta C."/>
            <person name="Rocha E."/>
            <person name="Roche B."/>
            <person name="Rose M."/>
            <person name="Sadaie Y."/>
            <person name="Sato T."/>
            <person name="Scanlan E."/>
            <person name="Schleich S."/>
            <person name="Schroeter R."/>
            <person name="Scoffone F."/>
            <person name="Sekiguchi J."/>
            <person name="Sekowska A."/>
            <person name="Seror S.J."/>
            <person name="Serror P."/>
            <person name="Shin B.-S."/>
            <person name="Soldo B."/>
            <person name="Sorokin A."/>
            <person name="Tacconi E."/>
            <person name="Takagi T."/>
            <person name="Takahashi H."/>
            <person name="Takemaru K."/>
            <person name="Takeuchi M."/>
            <person name="Tamakoshi A."/>
            <person name="Tanaka T."/>
            <person name="Terpstra P."/>
            <person name="Tognoni A."/>
            <person name="Tosato V."/>
            <person name="Uchiyama S."/>
            <person name="Vandenbol M."/>
            <person name="Vannier F."/>
            <person name="Vassarotti A."/>
            <person name="Viari A."/>
            <person name="Wambutt R."/>
            <person name="Wedler E."/>
            <person name="Wedler H."/>
            <person name="Weitzenegger T."/>
            <person name="Winters P."/>
            <person name="Wipat A."/>
            <person name="Yamamoto H."/>
            <person name="Yamane K."/>
            <person name="Yasumoto K."/>
            <person name="Yata K."/>
            <person name="Yoshida K."/>
            <person name="Yoshikawa H.-F."/>
            <person name="Zumstein E."/>
            <person name="Yoshikawa H."/>
            <person name="Danchin A."/>
        </authorList>
    </citation>
    <scope>NUCLEOTIDE SEQUENCE [LARGE SCALE GENOMIC DNA]</scope>
    <source>
        <strain>168</strain>
    </source>
</reference>
<reference key="3">
    <citation type="journal article" date="2002" name="Microbiology">
        <title>Regulatory interactions between the Pho and sigma(B)-dependent general stress regulons of Bacillus subtilis.</title>
        <authorList>
            <person name="Pragai Z."/>
            <person name="Harwood C.R."/>
        </authorList>
    </citation>
    <scope>TRANSCRIPTIONAL REGULATION</scope>
</reference>
<reference key="4">
    <citation type="journal article" date="2005" name="Microbiol. Mol. Biol. Rev.">
        <title>The TetR family of transcriptional repressors.</title>
        <authorList>
            <person name="Ramos J.L."/>
            <person name="Martinez-Bueno M."/>
            <person name="Molina-Henares A.J."/>
            <person name="Teran W."/>
            <person name="Watanabe K."/>
            <person name="Zhang X."/>
            <person name="Gallegos M.T."/>
            <person name="Brennan R."/>
            <person name="Tobes R."/>
        </authorList>
    </citation>
    <scope>REVIEW</scope>
    <scope>GENE FAMILY</scope>
</reference>
<sequence length="207" mass="24388">MKVSTKDKIIESAVMLFNQKGFSGTSVREIAKSADVNVAHISYYFKGKGGLMEHLVSEFYEGYSKTLETAASNISTQSTQEQLLQLVFDILSYQHNHRQLTRFVYREVTIDSTLIREIMSTYLMKEKYIFQLIIEEGEKQREYLTLPLPHFILQLKSLLMMPYLQPQYISEVLYMQPHEPYFYKMYFEEIKIWIRSVFRTGDVALTN</sequence>
<accession>O34970</accession>
<proteinExistence type="evidence at protein level"/>
<feature type="chain" id="PRO_0000070652" description="Probable HTH-type transcriptional regulator YttP">
    <location>
        <begin position="1"/>
        <end position="207"/>
    </location>
</feature>
<feature type="domain" description="HTH tetR-type" evidence="1">
    <location>
        <begin position="3"/>
        <end position="63"/>
    </location>
</feature>
<feature type="DNA-binding region" description="H-T-H motif" evidence="1">
    <location>
        <begin position="26"/>
        <end position="45"/>
    </location>
</feature>
<feature type="helix" evidence="3">
    <location>
        <begin position="5"/>
        <end position="19"/>
    </location>
</feature>
<feature type="turn" evidence="3">
    <location>
        <begin position="22"/>
        <end position="24"/>
    </location>
</feature>
<feature type="helix" evidence="3">
    <location>
        <begin position="27"/>
        <end position="34"/>
    </location>
</feature>
<feature type="helix" evidence="3">
    <location>
        <begin position="38"/>
        <end position="45"/>
    </location>
</feature>
<feature type="helix" evidence="3">
    <location>
        <begin position="48"/>
        <end position="71"/>
    </location>
</feature>
<feature type="turn" evidence="3">
    <location>
        <begin position="72"/>
        <end position="76"/>
    </location>
</feature>
<feature type="helix" evidence="3">
    <location>
        <begin position="79"/>
        <end position="96"/>
    </location>
</feature>
<feature type="helix" evidence="3">
    <location>
        <begin position="98"/>
        <end position="106"/>
    </location>
</feature>
<feature type="helix" evidence="3">
    <location>
        <begin position="114"/>
        <end position="137"/>
    </location>
</feature>
<feature type="turn" evidence="3">
    <location>
        <begin position="138"/>
        <end position="141"/>
    </location>
</feature>
<feature type="strand" evidence="3">
    <location>
        <begin position="143"/>
        <end position="146"/>
    </location>
</feature>
<feature type="helix" evidence="3">
    <location>
        <begin position="148"/>
        <end position="160"/>
    </location>
</feature>
<feature type="helix" evidence="3">
    <location>
        <begin position="161"/>
        <end position="163"/>
    </location>
</feature>
<feature type="helix" evidence="3">
    <location>
        <begin position="166"/>
        <end position="174"/>
    </location>
</feature>
<feature type="helix" evidence="3">
    <location>
        <begin position="183"/>
        <end position="196"/>
    </location>
</feature>
<comment type="induction">
    <text evidence="2">By phosphate starvation, via the PhoP/PhoR two-component regulatory system.</text>
</comment>
<name>YTTP_BACSU</name>
<organism>
    <name type="scientific">Bacillus subtilis (strain 168)</name>
    <dbReference type="NCBI Taxonomy" id="224308"/>
    <lineage>
        <taxon>Bacteria</taxon>
        <taxon>Bacillati</taxon>
        <taxon>Bacillota</taxon>
        <taxon>Bacilli</taxon>
        <taxon>Bacillales</taxon>
        <taxon>Bacillaceae</taxon>
        <taxon>Bacillus</taxon>
    </lineage>
</organism>